<protein>
    <recommendedName>
        <fullName evidence="1">UPF0102 protein Psyc_1908</fullName>
    </recommendedName>
</protein>
<accession>Q4FQF2</accession>
<name>Y1908_PSYA2</name>
<dbReference type="EMBL" id="CP000082">
    <property type="protein sequence ID" value="AAZ19756.1"/>
    <property type="molecule type" value="Genomic_DNA"/>
</dbReference>
<dbReference type="RefSeq" id="WP_011281165.1">
    <property type="nucleotide sequence ID" value="NC_007204.1"/>
</dbReference>
<dbReference type="SMR" id="Q4FQF2"/>
<dbReference type="STRING" id="259536.Psyc_1908"/>
<dbReference type="KEGG" id="par:Psyc_1908"/>
<dbReference type="eggNOG" id="COG0792">
    <property type="taxonomic scope" value="Bacteria"/>
</dbReference>
<dbReference type="HOGENOM" id="CLU_115353_3_0_6"/>
<dbReference type="OrthoDB" id="9794876at2"/>
<dbReference type="Proteomes" id="UP000000546">
    <property type="component" value="Chromosome"/>
</dbReference>
<dbReference type="GO" id="GO:0003676">
    <property type="term" value="F:nucleic acid binding"/>
    <property type="evidence" value="ECO:0007669"/>
    <property type="project" value="InterPro"/>
</dbReference>
<dbReference type="Gene3D" id="3.40.1350.10">
    <property type="match status" value="1"/>
</dbReference>
<dbReference type="HAMAP" id="MF_00048">
    <property type="entry name" value="UPF0102"/>
    <property type="match status" value="1"/>
</dbReference>
<dbReference type="InterPro" id="IPR011335">
    <property type="entry name" value="Restrct_endonuc-II-like"/>
</dbReference>
<dbReference type="InterPro" id="IPR011856">
    <property type="entry name" value="tRNA_endonuc-like_dom_sf"/>
</dbReference>
<dbReference type="InterPro" id="IPR003509">
    <property type="entry name" value="UPF0102_YraN-like"/>
</dbReference>
<dbReference type="NCBIfam" id="NF009150">
    <property type="entry name" value="PRK12497.1-3"/>
    <property type="match status" value="1"/>
</dbReference>
<dbReference type="NCBIfam" id="NF011279">
    <property type="entry name" value="PRK14687.1"/>
    <property type="match status" value="1"/>
</dbReference>
<dbReference type="NCBIfam" id="TIGR00252">
    <property type="entry name" value="YraN family protein"/>
    <property type="match status" value="1"/>
</dbReference>
<dbReference type="PANTHER" id="PTHR34039">
    <property type="entry name" value="UPF0102 PROTEIN YRAN"/>
    <property type="match status" value="1"/>
</dbReference>
<dbReference type="PANTHER" id="PTHR34039:SF1">
    <property type="entry name" value="UPF0102 PROTEIN YRAN"/>
    <property type="match status" value="1"/>
</dbReference>
<dbReference type="Pfam" id="PF02021">
    <property type="entry name" value="UPF0102"/>
    <property type="match status" value="1"/>
</dbReference>
<dbReference type="SUPFAM" id="SSF52980">
    <property type="entry name" value="Restriction endonuclease-like"/>
    <property type="match status" value="1"/>
</dbReference>
<comment type="similarity">
    <text evidence="1">Belongs to the UPF0102 family.</text>
</comment>
<sequence>MMCYDNSEMLSRQIDVMANDKPLMLTSPKQRQGGYFEQLACEFLQEQGLILIAKNWQRPKVGELDLVMLEKGQAWSTLVFIEVRQRNRSHFGDAALSVTAGKQRKIIKVARYFLHQHQKYSDYECRFDVIAYNTSNNKNSENETDIRLDNQLNQPLEKDQPEWLQGAFIASAW</sequence>
<keyword id="KW-1185">Reference proteome</keyword>
<organism>
    <name type="scientific">Psychrobacter arcticus (strain DSM 17307 / VKM B-2377 / 273-4)</name>
    <dbReference type="NCBI Taxonomy" id="259536"/>
    <lineage>
        <taxon>Bacteria</taxon>
        <taxon>Pseudomonadati</taxon>
        <taxon>Pseudomonadota</taxon>
        <taxon>Gammaproteobacteria</taxon>
        <taxon>Moraxellales</taxon>
        <taxon>Moraxellaceae</taxon>
        <taxon>Psychrobacter</taxon>
    </lineage>
</organism>
<proteinExistence type="inferred from homology"/>
<feature type="chain" id="PRO_0000336238" description="UPF0102 protein Psyc_1908">
    <location>
        <begin position="1"/>
        <end position="173"/>
    </location>
</feature>
<evidence type="ECO:0000255" key="1">
    <source>
        <dbReference type="HAMAP-Rule" id="MF_00048"/>
    </source>
</evidence>
<reference key="1">
    <citation type="journal article" date="2010" name="Appl. Environ. Microbiol.">
        <title>The genome sequence of Psychrobacter arcticus 273-4, a psychroactive Siberian permafrost bacterium, reveals mechanisms for adaptation to low-temperature growth.</title>
        <authorList>
            <person name="Ayala-del-Rio H.L."/>
            <person name="Chain P.S."/>
            <person name="Grzymski J.J."/>
            <person name="Ponder M.A."/>
            <person name="Ivanova N."/>
            <person name="Bergholz P.W."/>
            <person name="Di Bartolo G."/>
            <person name="Hauser L."/>
            <person name="Land M."/>
            <person name="Bakermans C."/>
            <person name="Rodrigues D."/>
            <person name="Klappenbach J."/>
            <person name="Zarka D."/>
            <person name="Larimer F."/>
            <person name="Richardson P."/>
            <person name="Murray A."/>
            <person name="Thomashow M."/>
            <person name="Tiedje J.M."/>
        </authorList>
    </citation>
    <scope>NUCLEOTIDE SEQUENCE [LARGE SCALE GENOMIC DNA]</scope>
    <source>
        <strain>DSM 17307 / VKM B-2377 / 273-4</strain>
    </source>
</reference>
<gene>
    <name type="ordered locus">Psyc_1908</name>
</gene>